<evidence type="ECO:0000250" key="1"/>
<evidence type="ECO:0000305" key="2"/>
<comment type="function">
    <text evidence="1">Catalyzes the decarboxylative condensation of pimeloyl-[acyl-carrier protein] and L-alanine to produce 8-amino-7-oxononanoate (AON), [acyl-carrier protein], and carbon dioxide.</text>
</comment>
<comment type="catalytic activity">
    <reaction>
        <text>6-carboxyhexanoyl-[ACP] + L-alanine + H(+) = (8S)-8-amino-7-oxononanoate + holo-[ACP] + CO2</text>
        <dbReference type="Rhea" id="RHEA:42288"/>
        <dbReference type="Rhea" id="RHEA-COMP:9685"/>
        <dbReference type="Rhea" id="RHEA-COMP:9955"/>
        <dbReference type="ChEBI" id="CHEBI:15378"/>
        <dbReference type="ChEBI" id="CHEBI:16526"/>
        <dbReference type="ChEBI" id="CHEBI:57972"/>
        <dbReference type="ChEBI" id="CHEBI:64479"/>
        <dbReference type="ChEBI" id="CHEBI:78846"/>
        <dbReference type="ChEBI" id="CHEBI:149468"/>
        <dbReference type="EC" id="2.3.1.47"/>
    </reaction>
</comment>
<comment type="cofactor">
    <cofactor evidence="1">
        <name>pyridoxal 5'-phosphate</name>
        <dbReference type="ChEBI" id="CHEBI:597326"/>
    </cofactor>
</comment>
<comment type="pathway">
    <text>Cofactor biosynthesis; biotin biosynthesis.</text>
</comment>
<comment type="subunit">
    <text evidence="1">Homodimer.</text>
</comment>
<comment type="similarity">
    <text evidence="2">Belongs to the class-II pyridoxal-phosphate-dependent aminotransferase family. BioF subfamily.</text>
</comment>
<keyword id="KW-0093">Biotin biosynthesis</keyword>
<keyword id="KW-0663">Pyridoxal phosphate</keyword>
<keyword id="KW-0808">Transferase</keyword>
<dbReference type="EC" id="2.3.1.47"/>
<dbReference type="EMBL" id="CP000742">
    <property type="protein sequence ID" value="ABR54791.1"/>
    <property type="molecule type" value="Genomic_DNA"/>
</dbReference>
<dbReference type="RefSeq" id="WP_011972692.1">
    <property type="nucleotide sequence ID" value="NC_009634.1"/>
</dbReference>
<dbReference type="SMR" id="A6UQL9"/>
<dbReference type="STRING" id="406327.Mevan_0886"/>
<dbReference type="GeneID" id="5326215"/>
<dbReference type="KEGG" id="mvn:Mevan_0886"/>
<dbReference type="eggNOG" id="arCOG00113">
    <property type="taxonomic scope" value="Archaea"/>
</dbReference>
<dbReference type="HOGENOM" id="CLU_015846_11_3_2"/>
<dbReference type="OrthoDB" id="9071at2157"/>
<dbReference type="UniPathway" id="UPA00078"/>
<dbReference type="Proteomes" id="UP000001107">
    <property type="component" value="Chromosome"/>
</dbReference>
<dbReference type="GO" id="GO:0008710">
    <property type="term" value="F:8-amino-7-oxononanoate synthase activity"/>
    <property type="evidence" value="ECO:0007669"/>
    <property type="project" value="UniProtKB-EC"/>
</dbReference>
<dbReference type="GO" id="GO:0030170">
    <property type="term" value="F:pyridoxal phosphate binding"/>
    <property type="evidence" value="ECO:0007669"/>
    <property type="project" value="InterPro"/>
</dbReference>
<dbReference type="GO" id="GO:0009102">
    <property type="term" value="P:biotin biosynthetic process"/>
    <property type="evidence" value="ECO:0007669"/>
    <property type="project" value="UniProtKB-UniPathway"/>
</dbReference>
<dbReference type="CDD" id="cd06454">
    <property type="entry name" value="KBL_like"/>
    <property type="match status" value="1"/>
</dbReference>
<dbReference type="Gene3D" id="3.90.1150.10">
    <property type="entry name" value="Aspartate Aminotransferase, domain 1"/>
    <property type="match status" value="1"/>
</dbReference>
<dbReference type="Gene3D" id="3.40.640.10">
    <property type="entry name" value="Type I PLP-dependent aspartate aminotransferase-like (Major domain)"/>
    <property type="match status" value="1"/>
</dbReference>
<dbReference type="InterPro" id="IPR001917">
    <property type="entry name" value="Aminotrans_II_pyridoxalP_BS"/>
</dbReference>
<dbReference type="InterPro" id="IPR004839">
    <property type="entry name" value="Aminotransferase_I/II_large"/>
</dbReference>
<dbReference type="InterPro" id="IPR050087">
    <property type="entry name" value="AON_synthase_class-II"/>
</dbReference>
<dbReference type="InterPro" id="IPR004723">
    <property type="entry name" value="AONS_Archaea/Proteobacteria"/>
</dbReference>
<dbReference type="InterPro" id="IPR015424">
    <property type="entry name" value="PyrdxlP-dep_Trfase"/>
</dbReference>
<dbReference type="InterPro" id="IPR015421">
    <property type="entry name" value="PyrdxlP-dep_Trfase_major"/>
</dbReference>
<dbReference type="InterPro" id="IPR015422">
    <property type="entry name" value="PyrdxlP-dep_Trfase_small"/>
</dbReference>
<dbReference type="NCBIfam" id="TIGR00858">
    <property type="entry name" value="bioF"/>
    <property type="match status" value="1"/>
</dbReference>
<dbReference type="PANTHER" id="PTHR13693:SF77">
    <property type="entry name" value="8-AMINO-7-OXONONANOATE SYNTHASE"/>
    <property type="match status" value="1"/>
</dbReference>
<dbReference type="PANTHER" id="PTHR13693">
    <property type="entry name" value="CLASS II AMINOTRANSFERASE/8-AMINO-7-OXONONANOATE SYNTHASE"/>
    <property type="match status" value="1"/>
</dbReference>
<dbReference type="Pfam" id="PF00155">
    <property type="entry name" value="Aminotran_1_2"/>
    <property type="match status" value="1"/>
</dbReference>
<dbReference type="SUPFAM" id="SSF53383">
    <property type="entry name" value="PLP-dependent transferases"/>
    <property type="match status" value="1"/>
</dbReference>
<dbReference type="PROSITE" id="PS00599">
    <property type="entry name" value="AA_TRANSFER_CLASS_2"/>
    <property type="match status" value="1"/>
</dbReference>
<protein>
    <recommendedName>
        <fullName>Putative 8-amino-7-oxononanoate synthase</fullName>
        <shortName>AONS</shortName>
        <ecNumber>2.3.1.47</ecNumber>
    </recommendedName>
    <alternativeName>
        <fullName>7-keto-8-amino-pelargonic acid synthase</fullName>
        <shortName>7-KAP synthase</shortName>
    </alternativeName>
    <alternativeName>
        <fullName>8-amino-7-ketopelargonate synthase</fullName>
    </alternativeName>
</protein>
<sequence>MFREKLKRELQGIKDENLYRKLRNQDDFILNFSTNDYLGLSKNEEVILAYNEGLKDGAGSTGSRLTSGNFKLHEKLEGVISEFKETEKSLVYSSGYAANVGVISALAKKGDLVLSDELNHASIIDGIRLSRADKLIYRHSDVQNLIEILEKNKYYENIIVVTDSVFSMDGDVSPIDKIAKIIDEYNAVLIIDDAHGTGVLGQGKGTLKHFKVKASDNIIQIGTLSKAIGTSGGFVSGIEELIDYLINNSRSFIYSTSLPPAVISASIKSFELVEKERLSKNLEKNIICANKLFKNHGFIKCESITPIYPFVFGEKSIDISKGLINHGIFGVPIRYPTVKKGMERIRISITSKHEKNDFKYLCEKIDKLTI</sequence>
<feature type="chain" id="PRO_0000381031" description="Putative 8-amino-7-oxononanoate synthase">
    <location>
        <begin position="1"/>
        <end position="370"/>
    </location>
</feature>
<feature type="binding site" evidence="1">
    <location>
        <position position="20"/>
    </location>
    <ligand>
        <name>substrate</name>
    </ligand>
</feature>
<feature type="binding site" evidence="1">
    <location>
        <begin position="95"/>
        <end position="96"/>
    </location>
    <ligand>
        <name>pyridoxal 5'-phosphate</name>
        <dbReference type="ChEBI" id="CHEBI:597326"/>
    </ligand>
</feature>
<feature type="binding site" evidence="1">
    <location>
        <position position="120"/>
    </location>
    <ligand>
        <name>substrate</name>
    </ligand>
</feature>
<feature type="binding site" evidence="1">
    <location>
        <position position="167"/>
    </location>
    <ligand>
        <name>pyridoxal 5'-phosphate</name>
        <dbReference type="ChEBI" id="CHEBI:597326"/>
    </ligand>
</feature>
<feature type="binding site" evidence="1">
    <location>
        <begin position="192"/>
        <end position="195"/>
    </location>
    <ligand>
        <name>pyridoxal 5'-phosphate</name>
        <dbReference type="ChEBI" id="CHEBI:597326"/>
    </ligand>
</feature>
<feature type="binding site" evidence="1">
    <location>
        <begin position="223"/>
        <end position="226"/>
    </location>
    <ligand>
        <name>pyridoxal 5'-phosphate</name>
        <dbReference type="ChEBI" id="CHEBI:597326"/>
    </ligand>
</feature>
<feature type="binding site" evidence="1">
    <location>
        <position position="337"/>
    </location>
    <ligand>
        <name>substrate</name>
    </ligand>
</feature>
<feature type="modified residue" description="N6-(pyridoxal phosphate)lysine" evidence="1">
    <location>
        <position position="226"/>
    </location>
</feature>
<gene>
    <name type="primary">bioF</name>
    <name type="ordered locus">Mevan_0886</name>
</gene>
<proteinExistence type="inferred from homology"/>
<organism>
    <name type="scientific">Methanococcus vannielii (strain ATCC 35089 / DSM 1224 / JCM 13029 / OCM 148 / SB)</name>
    <dbReference type="NCBI Taxonomy" id="406327"/>
    <lineage>
        <taxon>Archaea</taxon>
        <taxon>Methanobacteriati</taxon>
        <taxon>Methanobacteriota</taxon>
        <taxon>Methanomada group</taxon>
        <taxon>Methanococci</taxon>
        <taxon>Methanococcales</taxon>
        <taxon>Methanococcaceae</taxon>
        <taxon>Methanococcus</taxon>
    </lineage>
</organism>
<reference key="1">
    <citation type="submission" date="2007-06" db="EMBL/GenBank/DDBJ databases">
        <title>Complete sequence of Methanococcus vannielii SB.</title>
        <authorList>
            <consortium name="US DOE Joint Genome Institute"/>
            <person name="Copeland A."/>
            <person name="Lucas S."/>
            <person name="Lapidus A."/>
            <person name="Barry K."/>
            <person name="Glavina del Rio T."/>
            <person name="Dalin E."/>
            <person name="Tice H."/>
            <person name="Pitluck S."/>
            <person name="Chain P."/>
            <person name="Malfatti S."/>
            <person name="Shin M."/>
            <person name="Vergez L."/>
            <person name="Schmutz J."/>
            <person name="Larimer F."/>
            <person name="Land M."/>
            <person name="Hauser L."/>
            <person name="Kyrpides N."/>
            <person name="Anderson I."/>
            <person name="Sieprawska-Lupa M."/>
            <person name="Whitman W.B."/>
            <person name="Richardson P."/>
        </authorList>
    </citation>
    <scope>NUCLEOTIDE SEQUENCE [LARGE SCALE GENOMIC DNA]</scope>
    <source>
        <strain>ATCC 35089 / DSM 1224 / JCM 13029 / OCM 148 / SB</strain>
    </source>
</reference>
<name>BIOF_METVS</name>
<accession>A6UQL9</accession>